<protein>
    <recommendedName>
        <fullName>Uncharacterized membrane protein YIL054W</fullName>
    </recommendedName>
</protein>
<gene>
    <name type="ordered locus">YIL054W</name>
</gene>
<proteinExistence type="evidence at protein level"/>
<keyword id="KW-0472">Membrane</keyword>
<keyword id="KW-1185">Reference proteome</keyword>
<keyword id="KW-0812">Transmembrane</keyword>
<keyword id="KW-1133">Transmembrane helix</keyword>
<comment type="subcellular location">
    <subcellularLocation>
        <location>Membrane</location>
        <topology>Multi-pass membrane protein</topology>
    </subcellularLocation>
</comment>
<comment type="miscellaneous">
    <text evidence="2">Present with 521 molecules/cell in log phase SD medium.</text>
</comment>
<feature type="chain" id="PRO_0000202990" description="Uncharacterized membrane protein YIL054W">
    <location>
        <begin position="1"/>
        <end position="105"/>
    </location>
</feature>
<feature type="topological domain" description="Extracellular" evidence="1">
    <location>
        <begin position="1"/>
        <end position="48"/>
    </location>
</feature>
<feature type="transmembrane region" description="Helical" evidence="1">
    <location>
        <begin position="49"/>
        <end position="69"/>
    </location>
</feature>
<feature type="topological domain" description="Cytoplasmic" evidence="1">
    <location>
        <position position="70"/>
    </location>
</feature>
<feature type="transmembrane region" description="Helical" evidence="1">
    <location>
        <begin position="71"/>
        <end position="91"/>
    </location>
</feature>
<feature type="topological domain" description="Extracellular" evidence="1">
    <location>
        <begin position="92"/>
        <end position="105"/>
    </location>
</feature>
<accession>P40524</accession>
<accession>I2HB64</accession>
<name>YIF4_YEAST</name>
<dbReference type="EMBL" id="Z38060">
    <property type="protein sequence ID" value="CAA86168.1"/>
    <property type="molecule type" value="Genomic_DNA"/>
</dbReference>
<dbReference type="EMBL" id="AY558302">
    <property type="protein sequence ID" value="AAS56628.1"/>
    <property type="molecule type" value="Genomic_DNA"/>
</dbReference>
<dbReference type="EMBL" id="BK006942">
    <property type="protein sequence ID" value="DAA35118.1"/>
    <property type="molecule type" value="Genomic_DNA"/>
</dbReference>
<dbReference type="PIR" id="S48425">
    <property type="entry name" value="S48425"/>
</dbReference>
<dbReference type="RefSeq" id="NP_001257680.1">
    <property type="nucleotide sequence ID" value="NM_001270751.1"/>
</dbReference>
<dbReference type="SMR" id="P40524"/>
<dbReference type="BioGRID" id="300781">
    <property type="interactions" value="111"/>
</dbReference>
<dbReference type="DIP" id="DIP-5647N"/>
<dbReference type="FunCoup" id="P40524">
    <property type="interactions" value="28"/>
</dbReference>
<dbReference type="STRING" id="4932.YIL054W"/>
<dbReference type="PaxDb" id="4932-YIL054W"/>
<dbReference type="EnsemblFungi" id="YIL054W_mRNA">
    <property type="protein sequence ID" value="YIL054W"/>
    <property type="gene ID" value="YIL054W"/>
</dbReference>
<dbReference type="GeneID" id="854757"/>
<dbReference type="KEGG" id="sce:YIL054W"/>
<dbReference type="AGR" id="SGD:S000001316"/>
<dbReference type="SGD" id="S000001316">
    <property type="gene designation" value="YIL054W"/>
</dbReference>
<dbReference type="VEuPathDB" id="FungiDB:YIL054W"/>
<dbReference type="HOGENOM" id="CLU_2238159_0_0_1"/>
<dbReference type="InParanoid" id="P40524"/>
<dbReference type="OrthoDB" id="10305172at2759"/>
<dbReference type="BioCyc" id="YEAST:G3O-31324-MONOMER"/>
<dbReference type="BioGRID-ORCS" id="854757">
    <property type="hits" value="0 hits in 10 CRISPR screens"/>
</dbReference>
<dbReference type="PRO" id="PR:P40524"/>
<dbReference type="Proteomes" id="UP000002311">
    <property type="component" value="Chromosome IX"/>
</dbReference>
<dbReference type="RNAct" id="P40524">
    <property type="molecule type" value="protein"/>
</dbReference>
<dbReference type="GO" id="GO:0016020">
    <property type="term" value="C:membrane"/>
    <property type="evidence" value="ECO:0007669"/>
    <property type="project" value="UniProtKB-SubCell"/>
</dbReference>
<evidence type="ECO:0000255" key="1"/>
<evidence type="ECO:0000269" key="2">
    <source>
    </source>
</evidence>
<organism>
    <name type="scientific">Saccharomyces cerevisiae (strain ATCC 204508 / S288c)</name>
    <name type="common">Baker's yeast</name>
    <dbReference type="NCBI Taxonomy" id="559292"/>
    <lineage>
        <taxon>Eukaryota</taxon>
        <taxon>Fungi</taxon>
        <taxon>Dikarya</taxon>
        <taxon>Ascomycota</taxon>
        <taxon>Saccharomycotina</taxon>
        <taxon>Saccharomycetes</taxon>
        <taxon>Saccharomycetales</taxon>
        <taxon>Saccharomycetaceae</taxon>
        <taxon>Saccharomyces</taxon>
    </lineage>
</organism>
<reference key="1">
    <citation type="journal article" date="1997" name="Nature">
        <title>The nucleotide sequence of Saccharomyces cerevisiae chromosome IX.</title>
        <authorList>
            <person name="Churcher C.M."/>
            <person name="Bowman S."/>
            <person name="Badcock K."/>
            <person name="Bankier A.T."/>
            <person name="Brown D."/>
            <person name="Chillingworth T."/>
            <person name="Connor R."/>
            <person name="Devlin K."/>
            <person name="Gentles S."/>
            <person name="Hamlin N."/>
            <person name="Harris D.E."/>
            <person name="Horsnell T."/>
            <person name="Hunt S."/>
            <person name="Jagels K."/>
            <person name="Jones M."/>
            <person name="Lye G."/>
            <person name="Moule S."/>
            <person name="Odell C."/>
            <person name="Pearson D."/>
            <person name="Rajandream M.A."/>
            <person name="Rice P."/>
            <person name="Rowley N."/>
            <person name="Skelton J."/>
            <person name="Smith V."/>
            <person name="Walsh S.V."/>
            <person name="Whitehead S."/>
            <person name="Barrell B.G."/>
        </authorList>
    </citation>
    <scope>NUCLEOTIDE SEQUENCE [LARGE SCALE GENOMIC DNA]</scope>
    <source>
        <strain>ATCC 204508 / S288c</strain>
    </source>
</reference>
<reference key="2">
    <citation type="journal article" date="2014" name="G3 (Bethesda)">
        <title>The reference genome sequence of Saccharomyces cerevisiae: Then and now.</title>
        <authorList>
            <person name="Engel S.R."/>
            <person name="Dietrich F.S."/>
            <person name="Fisk D.G."/>
            <person name="Binkley G."/>
            <person name="Balakrishnan R."/>
            <person name="Costanzo M.C."/>
            <person name="Dwight S.S."/>
            <person name="Hitz B.C."/>
            <person name="Karra K."/>
            <person name="Nash R.S."/>
            <person name="Weng S."/>
            <person name="Wong E.D."/>
            <person name="Lloyd P."/>
            <person name="Skrzypek M.S."/>
            <person name="Miyasato S.R."/>
            <person name="Simison M."/>
            <person name="Cherry J.M."/>
        </authorList>
    </citation>
    <scope>GENOME REANNOTATION</scope>
    <source>
        <strain>ATCC 204508 / S288c</strain>
    </source>
</reference>
<reference key="3">
    <citation type="journal article" date="2007" name="Genome Res.">
        <title>Approaching a complete repository of sequence-verified protein-encoding clones for Saccharomyces cerevisiae.</title>
        <authorList>
            <person name="Hu Y."/>
            <person name="Rolfs A."/>
            <person name="Bhullar B."/>
            <person name="Murthy T.V.S."/>
            <person name="Zhu C."/>
            <person name="Berger M.F."/>
            <person name="Camargo A.A."/>
            <person name="Kelley F."/>
            <person name="McCarron S."/>
            <person name="Jepson D."/>
            <person name="Richardson A."/>
            <person name="Raphael J."/>
            <person name="Moreira D."/>
            <person name="Taycher E."/>
            <person name="Zuo D."/>
            <person name="Mohr S."/>
            <person name="Kane M.F."/>
            <person name="Williamson J."/>
            <person name="Simpson A.J.G."/>
            <person name="Bulyk M.L."/>
            <person name="Harlow E."/>
            <person name="Marsischky G."/>
            <person name="Kolodner R.D."/>
            <person name="LaBaer J."/>
        </authorList>
    </citation>
    <scope>NUCLEOTIDE SEQUENCE [GENOMIC DNA]</scope>
    <source>
        <strain>ATCC 204508 / S288c</strain>
    </source>
</reference>
<reference key="4">
    <citation type="journal article" date="2003" name="Nature">
        <title>Global analysis of protein expression in yeast.</title>
        <authorList>
            <person name="Ghaemmaghami S."/>
            <person name="Huh W.-K."/>
            <person name="Bower K."/>
            <person name="Howson R.W."/>
            <person name="Belle A."/>
            <person name="Dephoure N."/>
            <person name="O'Shea E.K."/>
            <person name="Weissman J.S."/>
        </authorList>
    </citation>
    <scope>LEVEL OF PROTEIN EXPRESSION [LARGE SCALE ANALYSIS]</scope>
</reference>
<reference key="5">
    <citation type="journal article" date="2006" name="Proc. Natl. Acad. Sci. U.S.A.">
        <title>A global topology map of the Saccharomyces cerevisiae membrane proteome.</title>
        <authorList>
            <person name="Kim H."/>
            <person name="Melen K."/>
            <person name="Oesterberg M."/>
            <person name="von Heijne G."/>
        </authorList>
    </citation>
    <scope>TOPOLOGY [LARGE SCALE ANALYSIS]</scope>
    <source>
        <strain>ATCC 208353 / W303-1A</strain>
    </source>
</reference>
<sequence>MAPKAFFVCLPWVLPRHALIVRQAGNPYHFLAYTNPRAPGKLQDSHCPVFFMGIIIITIITVTLAIIIINIIFLTLFDDGMCFYCSLLTFSFVSFNFDHFDHFDL</sequence>